<feature type="chain" id="PRO_1000009318" description="Leucine--tRNA ligase">
    <location>
        <begin position="1"/>
        <end position="809"/>
    </location>
</feature>
<feature type="short sequence motif" description="'HIGH' region">
    <location>
        <begin position="40"/>
        <end position="50"/>
    </location>
</feature>
<feature type="short sequence motif" description="'KMSKS' region">
    <location>
        <begin position="579"/>
        <end position="583"/>
    </location>
</feature>
<feature type="binding site" evidence="1">
    <location>
        <position position="582"/>
    </location>
    <ligand>
        <name>ATP</name>
        <dbReference type="ChEBI" id="CHEBI:30616"/>
    </ligand>
</feature>
<dbReference type="EC" id="6.1.1.4" evidence="1"/>
<dbReference type="EMBL" id="CP000538">
    <property type="protein sequence ID" value="EAQ72112.1"/>
    <property type="molecule type" value="Genomic_DNA"/>
</dbReference>
<dbReference type="RefSeq" id="WP_002855948.1">
    <property type="nucleotide sequence ID" value="NC_008787.1"/>
</dbReference>
<dbReference type="SMR" id="A1W078"/>
<dbReference type="KEGG" id="cjj:CJJ81176_1109"/>
<dbReference type="eggNOG" id="COG0495">
    <property type="taxonomic scope" value="Bacteria"/>
</dbReference>
<dbReference type="HOGENOM" id="CLU_004427_0_0_7"/>
<dbReference type="Proteomes" id="UP000000646">
    <property type="component" value="Chromosome"/>
</dbReference>
<dbReference type="GO" id="GO:0005829">
    <property type="term" value="C:cytosol"/>
    <property type="evidence" value="ECO:0007669"/>
    <property type="project" value="TreeGrafter"/>
</dbReference>
<dbReference type="GO" id="GO:0002161">
    <property type="term" value="F:aminoacyl-tRNA deacylase activity"/>
    <property type="evidence" value="ECO:0007669"/>
    <property type="project" value="InterPro"/>
</dbReference>
<dbReference type="GO" id="GO:0005524">
    <property type="term" value="F:ATP binding"/>
    <property type="evidence" value="ECO:0007669"/>
    <property type="project" value="UniProtKB-UniRule"/>
</dbReference>
<dbReference type="GO" id="GO:0004823">
    <property type="term" value="F:leucine-tRNA ligase activity"/>
    <property type="evidence" value="ECO:0007669"/>
    <property type="project" value="UniProtKB-UniRule"/>
</dbReference>
<dbReference type="GO" id="GO:0006429">
    <property type="term" value="P:leucyl-tRNA aminoacylation"/>
    <property type="evidence" value="ECO:0007669"/>
    <property type="project" value="UniProtKB-UniRule"/>
</dbReference>
<dbReference type="CDD" id="cd07958">
    <property type="entry name" value="Anticodon_Ia_Leu_BEm"/>
    <property type="match status" value="1"/>
</dbReference>
<dbReference type="FunFam" id="1.10.730.10:FF:000002">
    <property type="entry name" value="Leucine--tRNA ligase"/>
    <property type="match status" value="1"/>
</dbReference>
<dbReference type="Gene3D" id="3.10.20.590">
    <property type="match status" value="1"/>
</dbReference>
<dbReference type="Gene3D" id="3.40.50.620">
    <property type="entry name" value="HUPs"/>
    <property type="match status" value="2"/>
</dbReference>
<dbReference type="Gene3D" id="1.10.730.10">
    <property type="entry name" value="Isoleucyl-tRNA Synthetase, Domain 1"/>
    <property type="match status" value="2"/>
</dbReference>
<dbReference type="HAMAP" id="MF_00049_B">
    <property type="entry name" value="Leu_tRNA_synth_B"/>
    <property type="match status" value="1"/>
</dbReference>
<dbReference type="InterPro" id="IPR001412">
    <property type="entry name" value="aa-tRNA-synth_I_CS"/>
</dbReference>
<dbReference type="InterPro" id="IPR002302">
    <property type="entry name" value="Leu-tRNA-ligase"/>
</dbReference>
<dbReference type="InterPro" id="IPR025709">
    <property type="entry name" value="Leu_tRNA-synth_edit"/>
</dbReference>
<dbReference type="InterPro" id="IPR013155">
    <property type="entry name" value="M/V/L/I-tRNA-synth_anticd-bd"/>
</dbReference>
<dbReference type="InterPro" id="IPR015413">
    <property type="entry name" value="Methionyl/Leucyl_tRNA_Synth"/>
</dbReference>
<dbReference type="InterPro" id="IPR014729">
    <property type="entry name" value="Rossmann-like_a/b/a_fold"/>
</dbReference>
<dbReference type="InterPro" id="IPR009080">
    <property type="entry name" value="tRNAsynth_Ia_anticodon-bd"/>
</dbReference>
<dbReference type="InterPro" id="IPR009008">
    <property type="entry name" value="Val/Leu/Ile-tRNA-synth_edit"/>
</dbReference>
<dbReference type="NCBIfam" id="TIGR00396">
    <property type="entry name" value="leuS_bact"/>
    <property type="match status" value="1"/>
</dbReference>
<dbReference type="PANTHER" id="PTHR43740:SF2">
    <property type="entry name" value="LEUCINE--TRNA LIGASE, MITOCHONDRIAL"/>
    <property type="match status" value="1"/>
</dbReference>
<dbReference type="PANTHER" id="PTHR43740">
    <property type="entry name" value="LEUCYL-TRNA SYNTHETASE"/>
    <property type="match status" value="1"/>
</dbReference>
<dbReference type="Pfam" id="PF08264">
    <property type="entry name" value="Anticodon_1"/>
    <property type="match status" value="1"/>
</dbReference>
<dbReference type="Pfam" id="PF13603">
    <property type="entry name" value="tRNA-synt_1_2"/>
    <property type="match status" value="1"/>
</dbReference>
<dbReference type="Pfam" id="PF09334">
    <property type="entry name" value="tRNA-synt_1g"/>
    <property type="match status" value="2"/>
</dbReference>
<dbReference type="PRINTS" id="PR00985">
    <property type="entry name" value="TRNASYNTHLEU"/>
</dbReference>
<dbReference type="SUPFAM" id="SSF47323">
    <property type="entry name" value="Anticodon-binding domain of a subclass of class I aminoacyl-tRNA synthetases"/>
    <property type="match status" value="1"/>
</dbReference>
<dbReference type="SUPFAM" id="SSF52374">
    <property type="entry name" value="Nucleotidylyl transferase"/>
    <property type="match status" value="1"/>
</dbReference>
<dbReference type="SUPFAM" id="SSF50677">
    <property type="entry name" value="ValRS/IleRS/LeuRS editing domain"/>
    <property type="match status" value="1"/>
</dbReference>
<dbReference type="PROSITE" id="PS00178">
    <property type="entry name" value="AA_TRNA_LIGASE_I"/>
    <property type="match status" value="1"/>
</dbReference>
<gene>
    <name evidence="1" type="primary">leuS</name>
    <name type="ordered locus">CJJ81176_1109</name>
</gene>
<organism>
    <name type="scientific">Campylobacter jejuni subsp. jejuni serotype O:23/36 (strain 81-176)</name>
    <dbReference type="NCBI Taxonomy" id="354242"/>
    <lineage>
        <taxon>Bacteria</taxon>
        <taxon>Pseudomonadati</taxon>
        <taxon>Campylobacterota</taxon>
        <taxon>Epsilonproteobacteria</taxon>
        <taxon>Campylobacterales</taxon>
        <taxon>Campylobacteraceae</taxon>
        <taxon>Campylobacter</taxon>
    </lineage>
</organism>
<sequence>MAYEASLIEKKWQKIWDENEYFEPKDDLNLPKKYILSMFPYPSGRIHMGHVRNYTIGDALARYYRKIGFNVLHPIGFDSFGMPAENAAIKHKIHPKSWTYENIAYMKKELFSLGFSFSKKRMLATSDPLYTKFEQEFFIKMFEKGLIYTKEANVNWCEQDQTVLANEQVEDGKCWRCGHEVAQKKMPGYYVKITAYAEELLKDLEELKDKWPNQVLTMQENWIGKSEGLEFSLNLDEESKQKTKESSLEVFTTRADTIYGVSYIALAPEHKIVQNLLSQNLLNQDVLNKIKAIQNQSPRERQSSEKEGYFLGIYAIHPLSGEKIPLWVANFILADYGSGAVMAVPAHDERDFEFATKYNLAIKQVIQTQENLPYTQKSGKLIHSQEFDNLDCNEARLKIISQFEAKNIGKRVVNFKIRDWGVSRQRYWGAPIPMIKCQSCGIVPQKLENLPITLPEDVQITGEGNPLDKHPTWKNCICPKCGKEAQKESDTLDTFFESSWYFARFASDEKTWQEKALDEKSVKYWMSVDQYIGGIEHAILHLLYARFFQKALRDLGYLTQNEPFDRLLTQGMVLKDGAKMSKSKGNVVDPDEIIEKYGADTARLFILFAAPPAKELEWNDDAVEGAYRFICKLYDRAQNVKKGELVELKQENLNKEEKYARLKVYEALKKSFEVYHQSFAFNTLIAACMEALNALALCKNEALEQEAFYIILNILEPIIPHVCFELSEELFKCKNFKKLELKEEVFVKDTLNLAVSINGKKRAEFEISSSASKEEILAFAKENTAKWLEGKSIVKEIYVEGKLVNLVIK</sequence>
<comment type="catalytic activity">
    <reaction evidence="1">
        <text>tRNA(Leu) + L-leucine + ATP = L-leucyl-tRNA(Leu) + AMP + diphosphate</text>
        <dbReference type="Rhea" id="RHEA:11688"/>
        <dbReference type="Rhea" id="RHEA-COMP:9613"/>
        <dbReference type="Rhea" id="RHEA-COMP:9622"/>
        <dbReference type="ChEBI" id="CHEBI:30616"/>
        <dbReference type="ChEBI" id="CHEBI:33019"/>
        <dbReference type="ChEBI" id="CHEBI:57427"/>
        <dbReference type="ChEBI" id="CHEBI:78442"/>
        <dbReference type="ChEBI" id="CHEBI:78494"/>
        <dbReference type="ChEBI" id="CHEBI:456215"/>
        <dbReference type="EC" id="6.1.1.4"/>
    </reaction>
</comment>
<comment type="subcellular location">
    <subcellularLocation>
        <location evidence="1">Cytoplasm</location>
    </subcellularLocation>
</comment>
<comment type="similarity">
    <text evidence="1">Belongs to the class-I aminoacyl-tRNA synthetase family.</text>
</comment>
<protein>
    <recommendedName>
        <fullName evidence="1">Leucine--tRNA ligase</fullName>
        <ecNumber evidence="1">6.1.1.4</ecNumber>
    </recommendedName>
    <alternativeName>
        <fullName evidence="1">Leucyl-tRNA synthetase</fullName>
        <shortName evidence="1">LeuRS</shortName>
    </alternativeName>
</protein>
<keyword id="KW-0030">Aminoacyl-tRNA synthetase</keyword>
<keyword id="KW-0067">ATP-binding</keyword>
<keyword id="KW-0963">Cytoplasm</keyword>
<keyword id="KW-0436">Ligase</keyword>
<keyword id="KW-0547">Nucleotide-binding</keyword>
<keyword id="KW-0648">Protein biosynthesis</keyword>
<name>SYL_CAMJJ</name>
<reference key="1">
    <citation type="submission" date="2006-12" db="EMBL/GenBank/DDBJ databases">
        <authorList>
            <person name="Fouts D.E."/>
            <person name="Nelson K.E."/>
            <person name="Sebastian Y."/>
        </authorList>
    </citation>
    <scope>NUCLEOTIDE SEQUENCE [LARGE SCALE GENOMIC DNA]</scope>
    <source>
        <strain>81-176</strain>
    </source>
</reference>
<evidence type="ECO:0000255" key="1">
    <source>
        <dbReference type="HAMAP-Rule" id="MF_00049"/>
    </source>
</evidence>
<accession>A1W078</accession>
<proteinExistence type="inferred from homology"/>